<feature type="chain" id="PRO_0000176144" description="Uracil-DNA glycosylase">
    <location>
        <begin position="1"/>
        <end position="217"/>
    </location>
</feature>
<feature type="active site" description="Proton acceptor" evidence="1">
    <location>
        <position position="62"/>
    </location>
</feature>
<protein>
    <recommendedName>
        <fullName>Uracil-DNA glycosylase</fullName>
        <shortName>UDG</shortName>
        <ecNumber>3.2.2.27</ecNumber>
    </recommendedName>
</protein>
<sequence>MKHSSWHDLIKRELPNHYYNKINTFMDAVYESGIVYPPRDKVFNAIQITPLENVKVVIIGQDPYHGPQQAQGLSFSVPDNLPAPPSLQNILKELAEDIGSRSHHDLTSWAQQGVLLLNACLTVPEHQANGHAGLIWEPFTDAVIKVVNQKETPVVFILWGGYARKKKSLIDNPIHHIIESPHPSPLSAYRGFFGSRPFSRTNHFLEEEGINEIDWLN</sequence>
<comment type="function">
    <text evidence="1">Excises uracil residues from the DNA which can arise as a result of misincorporation of dUMP residues by DNA polymerase or due to deamination of cytosine.</text>
</comment>
<comment type="catalytic activity">
    <reaction>
        <text>Hydrolyzes single-stranded DNA or mismatched double-stranded DNA and polynucleotides, releasing free uracil.</text>
        <dbReference type="EC" id="3.2.2.27"/>
    </reaction>
</comment>
<comment type="subcellular location">
    <subcellularLocation>
        <location evidence="1">Cytoplasm</location>
    </subcellularLocation>
</comment>
<comment type="similarity">
    <text evidence="2">Belongs to the uracil-DNA glycosylase (UDG) superfamily. UNG family.</text>
</comment>
<organism>
    <name type="scientific">Streptococcus agalactiae serotype Ia (strain ATCC 27591 / A909 / CDC SS700)</name>
    <dbReference type="NCBI Taxonomy" id="205921"/>
    <lineage>
        <taxon>Bacteria</taxon>
        <taxon>Bacillati</taxon>
        <taxon>Bacillota</taxon>
        <taxon>Bacilli</taxon>
        <taxon>Lactobacillales</taxon>
        <taxon>Streptococcaceae</taxon>
        <taxon>Streptococcus</taxon>
    </lineage>
</organism>
<gene>
    <name type="primary">ung</name>
    <name type="ordered locus">SAK_1245</name>
</gene>
<evidence type="ECO:0000250" key="1"/>
<evidence type="ECO:0000305" key="2"/>
<proteinExistence type="inferred from homology"/>
<keyword id="KW-0963">Cytoplasm</keyword>
<keyword id="KW-0227">DNA damage</keyword>
<keyword id="KW-0234">DNA repair</keyword>
<keyword id="KW-0378">Hydrolase</keyword>
<accession>P0A4P5</accession>
<accession>Q3K0U4</accession>
<accession>Q9XDS8</accession>
<reference key="1">
    <citation type="journal article" date="1999" name="J. Bacteriol.">
        <title>Molecular characterization of type-specific capsular polysaccharide biosynthesis genes of Streptococcus agalactiae type Ia.</title>
        <authorList>
            <person name="Yamamoto S."/>
            <person name="Miyake K."/>
            <person name="Koike Y."/>
            <person name="Watanabe M."/>
            <person name="Machida Y."/>
            <person name="Ohta M."/>
            <person name="Iijima S."/>
        </authorList>
    </citation>
    <scope>NUCLEOTIDE SEQUENCE [GENOMIC DNA]</scope>
    <source>
        <strain>OI1 / Serotype Ia</strain>
    </source>
</reference>
<reference key="2">
    <citation type="journal article" date="2005" name="Proc. Natl. Acad. Sci. U.S.A.">
        <title>Genome analysis of multiple pathogenic isolates of Streptococcus agalactiae: implications for the microbial 'pan-genome'.</title>
        <authorList>
            <person name="Tettelin H."/>
            <person name="Masignani V."/>
            <person name="Cieslewicz M.J."/>
            <person name="Donati C."/>
            <person name="Medini D."/>
            <person name="Ward N.L."/>
            <person name="Angiuoli S.V."/>
            <person name="Crabtree J."/>
            <person name="Jones A.L."/>
            <person name="Durkin A.S."/>
            <person name="DeBoy R.T."/>
            <person name="Davidsen T.M."/>
            <person name="Mora M."/>
            <person name="Scarselli M."/>
            <person name="Margarit y Ros I."/>
            <person name="Peterson J.D."/>
            <person name="Hauser C.R."/>
            <person name="Sundaram J.P."/>
            <person name="Nelson W.C."/>
            <person name="Madupu R."/>
            <person name="Brinkac L.M."/>
            <person name="Dodson R.J."/>
            <person name="Rosovitz M.J."/>
            <person name="Sullivan S.A."/>
            <person name="Daugherty S.C."/>
            <person name="Haft D.H."/>
            <person name="Selengut J."/>
            <person name="Gwinn M.L."/>
            <person name="Zhou L."/>
            <person name="Zafar N."/>
            <person name="Khouri H."/>
            <person name="Radune D."/>
            <person name="Dimitrov G."/>
            <person name="Watkins K."/>
            <person name="O'Connor K.J."/>
            <person name="Smith S."/>
            <person name="Utterback T.R."/>
            <person name="White O."/>
            <person name="Rubens C.E."/>
            <person name="Grandi G."/>
            <person name="Madoff L.C."/>
            <person name="Kasper D.L."/>
            <person name="Telford J.L."/>
            <person name="Wessels M.R."/>
            <person name="Rappuoli R."/>
            <person name="Fraser C.M."/>
        </authorList>
    </citation>
    <scope>NUCLEOTIDE SEQUENCE [LARGE SCALE GENOMIC DNA]</scope>
    <source>
        <strain>ATCC 27591 / A909 / CDC SS700</strain>
    </source>
</reference>
<name>UNG_STRA1</name>
<dbReference type="EC" id="3.2.2.27"/>
<dbReference type="EMBL" id="AB028896">
    <property type="protein sequence ID" value="BAA82292.1"/>
    <property type="molecule type" value="Genomic_DNA"/>
</dbReference>
<dbReference type="EMBL" id="CP000114">
    <property type="protein sequence ID" value="ABA45529.1"/>
    <property type="molecule type" value="Genomic_DNA"/>
</dbReference>
<dbReference type="RefSeq" id="WP_000682955.1">
    <property type="nucleotide sequence ID" value="NC_007432.1"/>
</dbReference>
<dbReference type="SMR" id="P0A4P5"/>
<dbReference type="KEGG" id="sak:SAK_1245"/>
<dbReference type="HOGENOM" id="CLU_032162_3_1_9"/>
<dbReference type="GO" id="GO:0005737">
    <property type="term" value="C:cytoplasm"/>
    <property type="evidence" value="ECO:0007669"/>
    <property type="project" value="UniProtKB-SubCell"/>
</dbReference>
<dbReference type="GO" id="GO:0004844">
    <property type="term" value="F:uracil DNA N-glycosylase activity"/>
    <property type="evidence" value="ECO:0007669"/>
    <property type="project" value="UniProtKB-UniRule"/>
</dbReference>
<dbReference type="GO" id="GO:0097510">
    <property type="term" value="P:base-excision repair, AP site formation via deaminated base removal"/>
    <property type="evidence" value="ECO:0007669"/>
    <property type="project" value="TreeGrafter"/>
</dbReference>
<dbReference type="CDD" id="cd10027">
    <property type="entry name" value="UDG-F1-like"/>
    <property type="match status" value="1"/>
</dbReference>
<dbReference type="FunFam" id="3.40.470.10:FF:000008">
    <property type="entry name" value="Uracil-DNA glycosylase"/>
    <property type="match status" value="1"/>
</dbReference>
<dbReference type="Gene3D" id="3.40.470.10">
    <property type="entry name" value="Uracil-DNA glycosylase-like domain"/>
    <property type="match status" value="1"/>
</dbReference>
<dbReference type="HAMAP" id="MF_00148">
    <property type="entry name" value="UDG"/>
    <property type="match status" value="1"/>
</dbReference>
<dbReference type="InterPro" id="IPR002043">
    <property type="entry name" value="UDG_fam1"/>
</dbReference>
<dbReference type="InterPro" id="IPR018085">
    <property type="entry name" value="Ura-DNA_Glyclase_AS"/>
</dbReference>
<dbReference type="InterPro" id="IPR005122">
    <property type="entry name" value="Uracil-DNA_glycosylase-like"/>
</dbReference>
<dbReference type="InterPro" id="IPR036895">
    <property type="entry name" value="Uracil-DNA_glycosylase-like_sf"/>
</dbReference>
<dbReference type="NCBIfam" id="NF003588">
    <property type="entry name" value="PRK05254.1-1"/>
    <property type="match status" value="1"/>
</dbReference>
<dbReference type="NCBIfam" id="NF003589">
    <property type="entry name" value="PRK05254.1-2"/>
    <property type="match status" value="1"/>
</dbReference>
<dbReference type="NCBIfam" id="NF003591">
    <property type="entry name" value="PRK05254.1-4"/>
    <property type="match status" value="1"/>
</dbReference>
<dbReference type="NCBIfam" id="NF003592">
    <property type="entry name" value="PRK05254.1-5"/>
    <property type="match status" value="1"/>
</dbReference>
<dbReference type="NCBIfam" id="TIGR00628">
    <property type="entry name" value="ung"/>
    <property type="match status" value="1"/>
</dbReference>
<dbReference type="PANTHER" id="PTHR11264">
    <property type="entry name" value="URACIL-DNA GLYCOSYLASE"/>
    <property type="match status" value="1"/>
</dbReference>
<dbReference type="PANTHER" id="PTHR11264:SF0">
    <property type="entry name" value="URACIL-DNA GLYCOSYLASE"/>
    <property type="match status" value="1"/>
</dbReference>
<dbReference type="Pfam" id="PF03167">
    <property type="entry name" value="UDG"/>
    <property type="match status" value="1"/>
</dbReference>
<dbReference type="SMART" id="SM00986">
    <property type="entry name" value="UDG"/>
    <property type="match status" value="1"/>
</dbReference>
<dbReference type="SMART" id="SM00987">
    <property type="entry name" value="UreE_C"/>
    <property type="match status" value="1"/>
</dbReference>
<dbReference type="SUPFAM" id="SSF52141">
    <property type="entry name" value="Uracil-DNA glycosylase-like"/>
    <property type="match status" value="1"/>
</dbReference>
<dbReference type="PROSITE" id="PS00130">
    <property type="entry name" value="U_DNA_GLYCOSYLASE"/>
    <property type="match status" value="1"/>
</dbReference>